<feature type="initiator methionine" description="Removed">
    <location>
        <position position="1"/>
    </location>
</feature>
<feature type="chain" id="PRO_0000425672" description="Aklanonic acid methyl ester cyclase DnrD">
    <location>
        <begin position="2"/>
        <end position="145"/>
    </location>
</feature>
<feature type="binding site" evidence="1">
    <location>
        <position position="106"/>
    </location>
    <ligand>
        <name>substrate</name>
    </ligand>
</feature>
<gene>
    <name type="primary">dnrD</name>
</gene>
<accession>Q54808</accession>
<reference key="1">
    <citation type="journal article" date="1995" name="J. Bacteriol.">
        <title>Functional characterization and transcriptional analysis of a gene cluster governing early and late steps in daunorubicin biosynthesis in Streptomyces peucetius.</title>
        <authorList>
            <person name="Madduri K."/>
            <person name="Hutchinson C.R."/>
        </authorList>
    </citation>
    <scope>NUCLEOTIDE SEQUENCE [GENOMIC DNA]</scope>
    <scope>FUNCTION</scope>
    <scope>CATALYTIC ACTIVITY</scope>
    <source>
        <strain>ATCC 29050 / DSM 40754 / JCM 9920 / NBRC 100596 / NCIMB 10972</strain>
    </source>
</reference>
<reference key="2">
    <citation type="journal article" date="1999" name="Biochemistry">
        <title>DnrD cyclase involved in the biosynthesis of doxorubicin: purification and characterization of the recombinant enzyme.</title>
        <authorList>
            <person name="Kendrew S.G."/>
            <person name="Katayama K."/>
            <person name="Deutsch E."/>
            <person name="Madduri K."/>
            <person name="Hutchinson C.R."/>
        </authorList>
    </citation>
    <scope>FUNCTION</scope>
    <scope>CATALYTIC ACTIVITY</scope>
    <scope>BIOPHYSICOCHEMICAL PROPERTIES</scope>
    <scope>MASS SPECTROMETRY</scope>
    <scope>REACTION MECHANISM</scope>
    <source>
        <strain>ATCC 29050 / DSM 40754 / JCM 9920 / NBRC 100596 / NCIMB 10972</strain>
    </source>
</reference>
<keyword id="KW-0045">Antibiotic biosynthesis</keyword>
<keyword id="KW-0413">Isomerase</keyword>
<organism>
    <name type="scientific">Streptomyces peucetius</name>
    <dbReference type="NCBI Taxonomy" id="1950"/>
    <lineage>
        <taxon>Bacteria</taxon>
        <taxon>Bacillati</taxon>
        <taxon>Actinomycetota</taxon>
        <taxon>Actinomycetes</taxon>
        <taxon>Kitasatosporales</taxon>
        <taxon>Streptomycetaceae</taxon>
        <taxon>Streptomyces</taxon>
    </lineage>
</organism>
<comment type="function">
    <text evidence="2 3">Involved in the biosynthesis of aklavinone which is an important precursor common to the formation of the clinically significant anthracyclines such as carminomycin, daunorubicin (daunomycin), rhodomycin, aclacinomycin T (aklavin) and aclacinomycin A (aclarubicin). These compounds are aromatic polyketide antibiotics that exhibit high cytotoxicity and are widely applied in the chemotherapy of a variety of cancers. Catalyzes the cyclization of aklanonic acid methyl ester to yield aklaviketone presumably via an intramolecular aldol condensation mechanism, although water is not eliminated.</text>
</comment>
<comment type="catalytic activity">
    <reaction evidence="2 3">
        <text>methyl aklanonate = aklaviketone</text>
        <dbReference type="Rhea" id="RHEA:37879"/>
        <dbReference type="ChEBI" id="CHEBI:77988"/>
        <dbReference type="ChEBI" id="CHEBI:77994"/>
        <dbReference type="EC" id="5.5.1.23"/>
    </reaction>
</comment>
<comment type="biophysicochemical properties">
    <kinetics>
        <KM evidence="2">52.1 uM for aklanonic acid methyl ester (at pH 7 and at 30 degrees Celsius)</KM>
        <Vmax evidence="2">14.3 umol/min/mg enzyme (at pH 7 and at 30 degrees Celsius)</Vmax>
    </kinetics>
    <phDependence>
        <text evidence="2">Optimum pH is 7. The enzyme is active between pH 5.0 and 9.0.</text>
    </phDependence>
</comment>
<comment type="pathway">
    <text>Antibiotic biosynthesis; daunorubicin biosynthesis.</text>
</comment>
<comment type="pathway">
    <text>Antibiotic biosynthesis; carminomycin biosynthesis.</text>
</comment>
<comment type="pathway">
    <text>Antibiotic biosynthesis; rhodomycin biosynthesis.</text>
</comment>
<comment type="pathway">
    <text>Antibiotic biosynthesis; aclacinomycin biosynthesis.</text>
</comment>
<comment type="subunit">
    <text evidence="1">Homotetramer.</text>
</comment>
<comment type="mass spectrometry" mass="16572.0" method="Electrospray" evidence="2"/>
<comment type="miscellaneous">
    <text evidence="5">In contrast to the analogous intramolecular aldol cyclization catalyzed by TcmI, the conversion catalyzed by DnrD occurs after anthraquinone formation and requires activation of a carboxylic acid group by esterification of aklanonic acid, the aklanonic acid methyl ester precursor.</text>
</comment>
<comment type="similarity">
    <text evidence="4">Belongs to the polyketide cyclase DnrD family.</text>
</comment>
<protein>
    <recommendedName>
        <fullName>Aklanonic acid methyl ester cyclase DnrD</fullName>
        <shortName>AAME cyclase</shortName>
        <ecNumber>5.5.1.23</ecNumber>
    </recommendedName>
    <alternativeName>
        <fullName>Methyl aklanonate cyclase</fullName>
    </alternativeName>
</protein>
<dbReference type="EC" id="5.5.1.23"/>
<dbReference type="EMBL" id="L40425">
    <property type="protein sequence ID" value="AAA99000.1"/>
    <property type="molecule type" value="Genomic_DNA"/>
</dbReference>
<dbReference type="SMR" id="Q54808"/>
<dbReference type="KEGG" id="ag:AAA99000"/>
<dbReference type="UniPathway" id="UPA00054"/>
<dbReference type="UniPathway" id="UPA01040"/>
<dbReference type="UniPathway" id="UPA01042"/>
<dbReference type="UniPathway" id="UPA01043"/>
<dbReference type="GO" id="GO:0016872">
    <property type="term" value="F:intramolecular lyase activity"/>
    <property type="evidence" value="ECO:0000314"/>
    <property type="project" value="UniProtKB"/>
</dbReference>
<dbReference type="GO" id="GO:0017000">
    <property type="term" value="P:antibiotic biosynthetic process"/>
    <property type="evidence" value="ECO:0000314"/>
    <property type="project" value="UniProtKB"/>
</dbReference>
<dbReference type="GO" id="GO:1901771">
    <property type="term" value="P:daunorubicin biosynthetic process"/>
    <property type="evidence" value="ECO:0000314"/>
    <property type="project" value="UniProtKB"/>
</dbReference>
<dbReference type="GO" id="GO:0044598">
    <property type="term" value="P:doxorubicin metabolic process"/>
    <property type="evidence" value="ECO:0000314"/>
    <property type="project" value="UniProtKB"/>
</dbReference>
<dbReference type="Gene3D" id="3.10.450.50">
    <property type="match status" value="1"/>
</dbReference>
<dbReference type="InterPro" id="IPR009959">
    <property type="entry name" value="Cyclase_SnoaL-like"/>
</dbReference>
<dbReference type="InterPro" id="IPR032710">
    <property type="entry name" value="NTF2-like_dom_sf"/>
</dbReference>
<dbReference type="NCBIfam" id="NF033407">
    <property type="entry name" value="SnoaL_meth_ester"/>
    <property type="match status" value="1"/>
</dbReference>
<dbReference type="PANTHER" id="PTHR38436:SF1">
    <property type="entry name" value="ESTER CYCLASE"/>
    <property type="match status" value="1"/>
</dbReference>
<dbReference type="PANTHER" id="PTHR38436">
    <property type="entry name" value="POLYKETIDE CYCLASE SNOAL-LIKE DOMAIN"/>
    <property type="match status" value="1"/>
</dbReference>
<dbReference type="Pfam" id="PF07366">
    <property type="entry name" value="SnoaL"/>
    <property type="match status" value="1"/>
</dbReference>
<dbReference type="SUPFAM" id="SSF54427">
    <property type="entry name" value="NTF2-like"/>
    <property type="match status" value="1"/>
</dbReference>
<proteinExistence type="evidence at protein level"/>
<sequence length="145" mass="16701">MSTQIDLVRRMVEAYNTGKTDDVAEFIHLEYLNPGALEHNPELRGPEAFAAAVTWLKYAFSEEAHLEEIEYEENGPWVRAKLALYGRHVGNLVGMPATGRRFSGEQIHLIRIVDGKIRDHRDWPDYLGTYRQLGEPWPTPEGWRP</sequence>
<evidence type="ECO:0000250" key="1"/>
<evidence type="ECO:0000269" key="2">
    <source>
    </source>
</evidence>
<evidence type="ECO:0000269" key="3">
    <source>
    </source>
</evidence>
<evidence type="ECO:0000305" key="4"/>
<evidence type="ECO:0000305" key="5">
    <source>
    </source>
</evidence>
<name>DNRD_STRPE</name>